<comment type="function">
    <text evidence="1">Tetrapolymerization of the monopyrrole PBG into the hydroxymethylbilane pre-uroporphyrinogen in several discrete steps.</text>
</comment>
<comment type="catalytic activity">
    <reaction evidence="1">
        <text>4 porphobilinogen + H2O = hydroxymethylbilane + 4 NH4(+)</text>
        <dbReference type="Rhea" id="RHEA:13185"/>
        <dbReference type="ChEBI" id="CHEBI:15377"/>
        <dbReference type="ChEBI" id="CHEBI:28938"/>
        <dbReference type="ChEBI" id="CHEBI:57845"/>
        <dbReference type="ChEBI" id="CHEBI:58126"/>
        <dbReference type="EC" id="2.5.1.61"/>
    </reaction>
</comment>
<comment type="cofactor">
    <cofactor evidence="1">
        <name>dipyrromethane</name>
        <dbReference type="ChEBI" id="CHEBI:60342"/>
    </cofactor>
    <text evidence="1">Binds 1 dipyrromethane group covalently.</text>
</comment>
<comment type="pathway">
    <text evidence="1">Porphyrin-containing compound metabolism; protoporphyrin-IX biosynthesis; coproporphyrinogen-III from 5-aminolevulinate: step 2/4.</text>
</comment>
<comment type="subunit">
    <text evidence="1">Monomer.</text>
</comment>
<comment type="miscellaneous">
    <text evidence="1">The porphobilinogen subunits are added to the dipyrromethane group.</text>
</comment>
<comment type="similarity">
    <text evidence="1">Belongs to the HMBS family.</text>
</comment>
<organism>
    <name type="scientific">Bacillus cereus (strain ZK / E33L)</name>
    <dbReference type="NCBI Taxonomy" id="288681"/>
    <lineage>
        <taxon>Bacteria</taxon>
        <taxon>Bacillati</taxon>
        <taxon>Bacillota</taxon>
        <taxon>Bacilli</taxon>
        <taxon>Bacillales</taxon>
        <taxon>Bacillaceae</taxon>
        <taxon>Bacillus</taxon>
        <taxon>Bacillus cereus group</taxon>
    </lineage>
</organism>
<feature type="chain" id="PRO_0000142906" description="Porphobilinogen deaminase">
    <location>
        <begin position="1"/>
        <end position="309"/>
    </location>
</feature>
<feature type="modified residue" description="S-(dipyrrolylmethanemethyl)cysteine" evidence="1">
    <location>
        <position position="241"/>
    </location>
</feature>
<keyword id="KW-0627">Porphyrin biosynthesis</keyword>
<keyword id="KW-0808">Transferase</keyword>
<gene>
    <name evidence="1" type="primary">hemC</name>
    <name type="ordered locus">BCE33L4208</name>
</gene>
<evidence type="ECO:0000255" key="1">
    <source>
        <dbReference type="HAMAP-Rule" id="MF_00260"/>
    </source>
</evidence>
<reference key="1">
    <citation type="journal article" date="2006" name="J. Bacteriol.">
        <title>Pathogenomic sequence analysis of Bacillus cereus and Bacillus thuringiensis isolates closely related to Bacillus anthracis.</title>
        <authorList>
            <person name="Han C.S."/>
            <person name="Xie G."/>
            <person name="Challacombe J.F."/>
            <person name="Altherr M.R."/>
            <person name="Bhotika S.S."/>
            <person name="Bruce D."/>
            <person name="Campbell C.S."/>
            <person name="Campbell M.L."/>
            <person name="Chen J."/>
            <person name="Chertkov O."/>
            <person name="Cleland C."/>
            <person name="Dimitrijevic M."/>
            <person name="Doggett N.A."/>
            <person name="Fawcett J.J."/>
            <person name="Glavina T."/>
            <person name="Goodwin L.A."/>
            <person name="Hill K.K."/>
            <person name="Hitchcock P."/>
            <person name="Jackson P.J."/>
            <person name="Keim P."/>
            <person name="Kewalramani A.R."/>
            <person name="Longmire J."/>
            <person name="Lucas S."/>
            <person name="Malfatti S."/>
            <person name="McMurry K."/>
            <person name="Meincke L.J."/>
            <person name="Misra M."/>
            <person name="Moseman B.L."/>
            <person name="Mundt M."/>
            <person name="Munk A.C."/>
            <person name="Okinaka R.T."/>
            <person name="Parson-Quintana B."/>
            <person name="Reilly L.P."/>
            <person name="Richardson P."/>
            <person name="Robinson D.L."/>
            <person name="Rubin E."/>
            <person name="Saunders E."/>
            <person name="Tapia R."/>
            <person name="Tesmer J.G."/>
            <person name="Thayer N."/>
            <person name="Thompson L.S."/>
            <person name="Tice H."/>
            <person name="Ticknor L.O."/>
            <person name="Wills P.L."/>
            <person name="Brettin T.S."/>
            <person name="Gilna P."/>
        </authorList>
    </citation>
    <scope>NUCLEOTIDE SEQUENCE [LARGE SCALE GENOMIC DNA]</scope>
    <source>
        <strain>ZK / E33L</strain>
    </source>
</reference>
<protein>
    <recommendedName>
        <fullName evidence="1">Porphobilinogen deaminase</fullName>
        <shortName evidence="1">PBG</shortName>
        <ecNumber evidence="1">2.5.1.61</ecNumber>
    </recommendedName>
    <alternativeName>
        <fullName evidence="1">Hydroxymethylbilane synthase</fullName>
        <shortName evidence="1">HMBS</shortName>
    </alternativeName>
    <alternativeName>
        <fullName evidence="1">Pre-uroporphyrinogen synthase</fullName>
    </alternativeName>
</protein>
<sequence>MRKIIVGSRKSKLALTQTNWFIDQLKALGLPYEFEVKEIVTKGDVILDVTLSKVGGKGLFVKEIEHALLTKEIDMAVHSMKDMPAVLPEGLMIGCTPKRVDPRDAFISKSGASFKELAEGAILGTSSLRRSAQLLAARPDLQVKWIRGNIDTRLRKLKEEDYDAIILATAGLQRMGWDDEVITEHLDETLCVPAVGQGALAIECREDDTDLLQLLAHINDAVTERTVAAERVFLHKLEGGCQVPIAGYATLTENDAIELTALVGSMDGSVLLKETVVGTDPEKVGLEAADRLIKQGAKELILAANKGQQ</sequence>
<proteinExistence type="inferred from homology"/>
<accession>Q633Y0</accession>
<name>HEM3_BACCZ</name>
<dbReference type="EC" id="2.5.1.61" evidence="1"/>
<dbReference type="EMBL" id="CP000001">
    <property type="protein sequence ID" value="AAU16062.1"/>
    <property type="molecule type" value="Genomic_DNA"/>
</dbReference>
<dbReference type="RefSeq" id="WP_001226417.1">
    <property type="nucleotide sequence ID" value="NZ_CP009968.1"/>
</dbReference>
<dbReference type="SMR" id="Q633Y0"/>
<dbReference type="KEGG" id="bcz:BCE33L4208"/>
<dbReference type="PATRIC" id="fig|288681.22.peg.1175"/>
<dbReference type="UniPathway" id="UPA00251">
    <property type="reaction ID" value="UER00319"/>
</dbReference>
<dbReference type="Proteomes" id="UP000002612">
    <property type="component" value="Chromosome"/>
</dbReference>
<dbReference type="GO" id="GO:0005737">
    <property type="term" value="C:cytoplasm"/>
    <property type="evidence" value="ECO:0007669"/>
    <property type="project" value="TreeGrafter"/>
</dbReference>
<dbReference type="GO" id="GO:0004418">
    <property type="term" value="F:hydroxymethylbilane synthase activity"/>
    <property type="evidence" value="ECO:0007669"/>
    <property type="project" value="UniProtKB-UniRule"/>
</dbReference>
<dbReference type="GO" id="GO:0006782">
    <property type="term" value="P:protoporphyrinogen IX biosynthetic process"/>
    <property type="evidence" value="ECO:0007669"/>
    <property type="project" value="UniProtKB-UniRule"/>
</dbReference>
<dbReference type="CDD" id="cd13646">
    <property type="entry name" value="PBP2_EcHMBS_like"/>
    <property type="match status" value="1"/>
</dbReference>
<dbReference type="FunFam" id="3.30.160.40:FF:000001">
    <property type="entry name" value="Porphobilinogen deaminase"/>
    <property type="match status" value="1"/>
</dbReference>
<dbReference type="FunFam" id="3.40.190.10:FF:000004">
    <property type="entry name" value="Porphobilinogen deaminase"/>
    <property type="match status" value="1"/>
</dbReference>
<dbReference type="FunFam" id="3.40.190.10:FF:000005">
    <property type="entry name" value="Porphobilinogen deaminase"/>
    <property type="match status" value="1"/>
</dbReference>
<dbReference type="Gene3D" id="3.40.190.10">
    <property type="entry name" value="Periplasmic binding protein-like II"/>
    <property type="match status" value="2"/>
</dbReference>
<dbReference type="Gene3D" id="3.30.160.40">
    <property type="entry name" value="Porphobilinogen deaminase, C-terminal domain"/>
    <property type="match status" value="1"/>
</dbReference>
<dbReference type="HAMAP" id="MF_00260">
    <property type="entry name" value="Porphobil_deam"/>
    <property type="match status" value="1"/>
</dbReference>
<dbReference type="InterPro" id="IPR000860">
    <property type="entry name" value="HemC"/>
</dbReference>
<dbReference type="InterPro" id="IPR022419">
    <property type="entry name" value="Porphobilin_deaminase_cofac_BS"/>
</dbReference>
<dbReference type="InterPro" id="IPR022417">
    <property type="entry name" value="Porphobilin_deaminase_N"/>
</dbReference>
<dbReference type="InterPro" id="IPR022418">
    <property type="entry name" value="Porphobilinogen_deaminase_C"/>
</dbReference>
<dbReference type="InterPro" id="IPR036803">
    <property type="entry name" value="Porphobilinogen_deaminase_C_sf"/>
</dbReference>
<dbReference type="NCBIfam" id="TIGR00212">
    <property type="entry name" value="hemC"/>
    <property type="match status" value="1"/>
</dbReference>
<dbReference type="PANTHER" id="PTHR11557">
    <property type="entry name" value="PORPHOBILINOGEN DEAMINASE"/>
    <property type="match status" value="1"/>
</dbReference>
<dbReference type="PANTHER" id="PTHR11557:SF0">
    <property type="entry name" value="PORPHOBILINOGEN DEAMINASE"/>
    <property type="match status" value="1"/>
</dbReference>
<dbReference type="Pfam" id="PF01379">
    <property type="entry name" value="Porphobil_deam"/>
    <property type="match status" value="1"/>
</dbReference>
<dbReference type="Pfam" id="PF03900">
    <property type="entry name" value="Porphobil_deamC"/>
    <property type="match status" value="1"/>
</dbReference>
<dbReference type="PIRSF" id="PIRSF001438">
    <property type="entry name" value="4pyrrol_synth_OHMeBilane_synth"/>
    <property type="match status" value="1"/>
</dbReference>
<dbReference type="PRINTS" id="PR00151">
    <property type="entry name" value="PORPHBDMNASE"/>
</dbReference>
<dbReference type="SUPFAM" id="SSF53850">
    <property type="entry name" value="Periplasmic binding protein-like II"/>
    <property type="match status" value="1"/>
</dbReference>
<dbReference type="SUPFAM" id="SSF54782">
    <property type="entry name" value="Porphobilinogen deaminase (hydroxymethylbilane synthase), C-terminal domain"/>
    <property type="match status" value="1"/>
</dbReference>
<dbReference type="PROSITE" id="PS00533">
    <property type="entry name" value="PORPHOBILINOGEN_DEAM"/>
    <property type="match status" value="1"/>
</dbReference>